<name>RIMP_CAMC5</name>
<comment type="function">
    <text evidence="1">Required for maturation of 30S ribosomal subunits.</text>
</comment>
<comment type="subcellular location">
    <subcellularLocation>
        <location evidence="1">Cytoplasm</location>
    </subcellularLocation>
</comment>
<comment type="similarity">
    <text evidence="1">Belongs to the RimP family.</text>
</comment>
<gene>
    <name evidence="1" type="primary">rimP</name>
    <name type="ordered locus">Ccur92_14790</name>
    <name type="ORF">CCV52592_0357</name>
</gene>
<accession>A7GZZ1</accession>
<protein>
    <recommendedName>
        <fullName evidence="1">Ribosome maturation factor RimP</fullName>
    </recommendedName>
</protein>
<keyword id="KW-0963">Cytoplasm</keyword>
<keyword id="KW-1185">Reference proteome</keyword>
<keyword id="KW-0690">Ribosome biogenesis</keyword>
<dbReference type="EMBL" id="CP000767">
    <property type="protein sequence ID" value="EAT99589.1"/>
    <property type="molecule type" value="Genomic_DNA"/>
</dbReference>
<dbReference type="RefSeq" id="WP_011992626.1">
    <property type="nucleotide sequence ID" value="NC_009715.2"/>
</dbReference>
<dbReference type="SMR" id="A7GZZ1"/>
<dbReference type="STRING" id="360105.CCV52592_0357"/>
<dbReference type="KEGG" id="ccv:CCV52592_0357"/>
<dbReference type="HOGENOM" id="CLU_070525_2_2_7"/>
<dbReference type="OrthoDB" id="9805006at2"/>
<dbReference type="Proteomes" id="UP000006380">
    <property type="component" value="Chromosome"/>
</dbReference>
<dbReference type="GO" id="GO:0005829">
    <property type="term" value="C:cytosol"/>
    <property type="evidence" value="ECO:0007669"/>
    <property type="project" value="TreeGrafter"/>
</dbReference>
<dbReference type="GO" id="GO:0000028">
    <property type="term" value="P:ribosomal small subunit assembly"/>
    <property type="evidence" value="ECO:0007669"/>
    <property type="project" value="TreeGrafter"/>
</dbReference>
<dbReference type="GO" id="GO:0006412">
    <property type="term" value="P:translation"/>
    <property type="evidence" value="ECO:0007669"/>
    <property type="project" value="TreeGrafter"/>
</dbReference>
<dbReference type="CDD" id="cd01734">
    <property type="entry name" value="YlxS_C"/>
    <property type="match status" value="1"/>
</dbReference>
<dbReference type="FunFam" id="3.30.300.70:FF:000001">
    <property type="entry name" value="Ribosome maturation factor RimP"/>
    <property type="match status" value="1"/>
</dbReference>
<dbReference type="Gene3D" id="3.30.300.70">
    <property type="entry name" value="RimP-like superfamily, N-terminal"/>
    <property type="match status" value="1"/>
</dbReference>
<dbReference type="HAMAP" id="MF_01077">
    <property type="entry name" value="RimP"/>
    <property type="match status" value="1"/>
</dbReference>
<dbReference type="InterPro" id="IPR003728">
    <property type="entry name" value="Ribosome_maturation_RimP"/>
</dbReference>
<dbReference type="InterPro" id="IPR028998">
    <property type="entry name" value="RimP_C"/>
</dbReference>
<dbReference type="InterPro" id="IPR036847">
    <property type="entry name" value="RimP_C_sf"/>
</dbReference>
<dbReference type="InterPro" id="IPR028989">
    <property type="entry name" value="RimP_N"/>
</dbReference>
<dbReference type="InterPro" id="IPR035956">
    <property type="entry name" value="RimP_N_sf"/>
</dbReference>
<dbReference type="NCBIfam" id="NF011232">
    <property type="entry name" value="PRK14639.1"/>
    <property type="match status" value="1"/>
</dbReference>
<dbReference type="PANTHER" id="PTHR33867">
    <property type="entry name" value="RIBOSOME MATURATION FACTOR RIMP"/>
    <property type="match status" value="1"/>
</dbReference>
<dbReference type="PANTHER" id="PTHR33867:SF1">
    <property type="entry name" value="RIBOSOME MATURATION FACTOR RIMP"/>
    <property type="match status" value="1"/>
</dbReference>
<dbReference type="Pfam" id="PF17384">
    <property type="entry name" value="DUF150_C"/>
    <property type="match status" value="1"/>
</dbReference>
<dbReference type="Pfam" id="PF02576">
    <property type="entry name" value="RimP_N"/>
    <property type="match status" value="1"/>
</dbReference>
<dbReference type="SUPFAM" id="SSF74942">
    <property type="entry name" value="YhbC-like, C-terminal domain"/>
    <property type="match status" value="1"/>
</dbReference>
<dbReference type="SUPFAM" id="SSF75420">
    <property type="entry name" value="YhbC-like, N-terminal domain"/>
    <property type="match status" value="1"/>
</dbReference>
<organism>
    <name type="scientific">Campylobacter curvus (strain 525.92)</name>
    <dbReference type="NCBI Taxonomy" id="360105"/>
    <lineage>
        <taxon>Bacteria</taxon>
        <taxon>Pseudomonadati</taxon>
        <taxon>Campylobacterota</taxon>
        <taxon>Epsilonproteobacteria</taxon>
        <taxon>Campylobacterales</taxon>
        <taxon>Campylobacteraceae</taxon>
        <taxon>Campylobacter</taxon>
    </lineage>
</organism>
<evidence type="ECO:0000255" key="1">
    <source>
        <dbReference type="HAMAP-Rule" id="MF_01077"/>
    </source>
</evidence>
<proteinExistence type="inferred from homology"/>
<sequence length="138" mass="15368">MDNLNELVKECGVELYDTEIANENGRAIYRIYITKNGGVSLDDCEKVSRLLSPIFDVEPPISGDYNLEVSSPGLERKLSEARHFKASLGELVKAQTAEAKFAGRLVKADDESIALENDEGVFEIKIGDIKKAKTYLEW</sequence>
<reference key="1">
    <citation type="submission" date="2007-07" db="EMBL/GenBank/DDBJ databases">
        <title>Genome sequence of Campylobacter curvus 525.92 isolated from human feces.</title>
        <authorList>
            <person name="Fouts D.E."/>
            <person name="Mongodin E.F."/>
            <person name="Puiu D."/>
            <person name="Sebastian Y."/>
            <person name="Miller W.G."/>
            <person name="Mandrell R.E."/>
            <person name="Lastovica A.J."/>
            <person name="Nelson K.E."/>
        </authorList>
    </citation>
    <scope>NUCLEOTIDE SEQUENCE [LARGE SCALE GENOMIC DNA]</scope>
    <source>
        <strain>525.92</strain>
    </source>
</reference>
<feature type="chain" id="PRO_0000384619" description="Ribosome maturation factor RimP">
    <location>
        <begin position="1"/>
        <end position="138"/>
    </location>
</feature>